<reference key="1">
    <citation type="journal article" date="2002" name="Mol. Microbiol.">
        <title>Genome sequence of Streptococcus agalactiae, a pathogen causing invasive neonatal disease.</title>
        <authorList>
            <person name="Glaser P."/>
            <person name="Rusniok C."/>
            <person name="Buchrieser C."/>
            <person name="Chevalier F."/>
            <person name="Frangeul L."/>
            <person name="Msadek T."/>
            <person name="Zouine M."/>
            <person name="Couve E."/>
            <person name="Lalioui L."/>
            <person name="Poyart C."/>
            <person name="Trieu-Cuot P."/>
            <person name="Kunst F."/>
        </authorList>
    </citation>
    <scope>NUCLEOTIDE SEQUENCE [LARGE SCALE GENOMIC DNA]</scope>
    <source>
        <strain>NEM316</strain>
    </source>
</reference>
<protein>
    <recommendedName>
        <fullName evidence="1">Ribonuclease Z</fullName>
        <shortName evidence="1">RNase Z</shortName>
        <ecNumber evidence="1">3.1.26.11</ecNumber>
    </recommendedName>
    <alternativeName>
        <fullName evidence="1">tRNA 3 endonuclease</fullName>
    </alternativeName>
    <alternativeName>
        <fullName evidence="1">tRNase Z</fullName>
    </alternativeName>
</protein>
<gene>
    <name evidence="1" type="primary">rnz</name>
    <name type="ordered locus">gbs1282</name>
</gene>
<sequence length="309" mass="34441">MEIQFLGTGAGQPAKARNVSSLVLKLLDEINEVWMFDCGEGTQRQILETTIKPRKVKKIFITHMHGDHVFGLPGFLSSRAFQANEEQTDLDIYGPVGIKSFVMTGLRTSGSRLPYRIHFHEFDESSLGKIMETDKFTVYAEKLDHTIFCMGYRVVQKDLEGTLDAEALKLAGVPFGPLFGKVKNGENVTLEDGREIIAKDYISEPKKGKVITILGDTRKTDASIRLALGADVLVHESTYGKGDERIAKSHGHSTNMQAADIAKQANAKRLLLNHVSARFMGRDCWQMEEDAKTIFSNTHLVRDLEEVGI</sequence>
<organism>
    <name type="scientific">Streptococcus agalactiae serotype III (strain NEM316)</name>
    <dbReference type="NCBI Taxonomy" id="211110"/>
    <lineage>
        <taxon>Bacteria</taxon>
        <taxon>Bacillati</taxon>
        <taxon>Bacillota</taxon>
        <taxon>Bacilli</taxon>
        <taxon>Lactobacillales</taxon>
        <taxon>Streptococcaceae</taxon>
        <taxon>Streptococcus</taxon>
    </lineage>
</organism>
<evidence type="ECO:0000255" key="1">
    <source>
        <dbReference type="HAMAP-Rule" id="MF_01818"/>
    </source>
</evidence>
<dbReference type="EC" id="3.1.26.11" evidence="1"/>
<dbReference type="EMBL" id="AL766850">
    <property type="protein sequence ID" value="CAD46941.1"/>
    <property type="molecule type" value="Genomic_DNA"/>
</dbReference>
<dbReference type="RefSeq" id="WP_000405388.1">
    <property type="nucleotide sequence ID" value="NC_004368.1"/>
</dbReference>
<dbReference type="SMR" id="Q8E4W1"/>
<dbReference type="GeneID" id="66886133"/>
<dbReference type="KEGG" id="san:gbs1282"/>
<dbReference type="eggNOG" id="COG1234">
    <property type="taxonomic scope" value="Bacteria"/>
</dbReference>
<dbReference type="HOGENOM" id="CLU_031317_2_0_9"/>
<dbReference type="Proteomes" id="UP000000823">
    <property type="component" value="Chromosome"/>
</dbReference>
<dbReference type="GO" id="GO:0042781">
    <property type="term" value="F:3'-tRNA processing endoribonuclease activity"/>
    <property type="evidence" value="ECO:0007669"/>
    <property type="project" value="UniProtKB-UniRule"/>
</dbReference>
<dbReference type="GO" id="GO:0008270">
    <property type="term" value="F:zinc ion binding"/>
    <property type="evidence" value="ECO:0007669"/>
    <property type="project" value="UniProtKB-UniRule"/>
</dbReference>
<dbReference type="CDD" id="cd07717">
    <property type="entry name" value="RNaseZ_ZiPD-like_MBL-fold"/>
    <property type="match status" value="1"/>
</dbReference>
<dbReference type="FunFam" id="3.60.15.10:FF:000002">
    <property type="entry name" value="Ribonuclease Z"/>
    <property type="match status" value="1"/>
</dbReference>
<dbReference type="Gene3D" id="3.60.15.10">
    <property type="entry name" value="Ribonuclease Z/Hydroxyacylglutathione hydrolase-like"/>
    <property type="match status" value="1"/>
</dbReference>
<dbReference type="HAMAP" id="MF_01818">
    <property type="entry name" value="RNase_Z_BN"/>
    <property type="match status" value="1"/>
</dbReference>
<dbReference type="InterPro" id="IPR001279">
    <property type="entry name" value="Metallo-B-lactamas"/>
</dbReference>
<dbReference type="InterPro" id="IPR036866">
    <property type="entry name" value="RibonucZ/Hydroxyglut_hydro"/>
</dbReference>
<dbReference type="InterPro" id="IPR013471">
    <property type="entry name" value="RNase_Z/BN"/>
</dbReference>
<dbReference type="NCBIfam" id="NF000801">
    <property type="entry name" value="PRK00055.1-3"/>
    <property type="match status" value="1"/>
</dbReference>
<dbReference type="NCBIfam" id="TIGR02651">
    <property type="entry name" value="RNase_Z"/>
    <property type="match status" value="1"/>
</dbReference>
<dbReference type="PANTHER" id="PTHR46018">
    <property type="entry name" value="ZINC PHOSPHODIESTERASE ELAC PROTEIN 1"/>
    <property type="match status" value="1"/>
</dbReference>
<dbReference type="PANTHER" id="PTHR46018:SF2">
    <property type="entry name" value="ZINC PHOSPHODIESTERASE ELAC PROTEIN 1"/>
    <property type="match status" value="1"/>
</dbReference>
<dbReference type="Pfam" id="PF00753">
    <property type="entry name" value="Lactamase_B"/>
    <property type="match status" value="1"/>
</dbReference>
<dbReference type="SUPFAM" id="SSF56281">
    <property type="entry name" value="Metallo-hydrolase/oxidoreductase"/>
    <property type="match status" value="1"/>
</dbReference>
<name>RNZ_STRA3</name>
<accession>Q8E4W1</accession>
<comment type="function">
    <text evidence="1">Zinc phosphodiesterase, which displays some tRNA 3'-processing endonuclease activity. Probably involved in tRNA maturation, by removing a 3'-trailer from precursor tRNA.</text>
</comment>
<comment type="catalytic activity">
    <reaction evidence="1">
        <text>Endonucleolytic cleavage of RNA, removing extra 3' nucleotides from tRNA precursor, generating 3' termini of tRNAs. A 3'-hydroxy group is left at the tRNA terminus and a 5'-phosphoryl group is left at the trailer molecule.</text>
        <dbReference type="EC" id="3.1.26.11"/>
    </reaction>
</comment>
<comment type="cofactor">
    <cofactor evidence="1">
        <name>Zn(2+)</name>
        <dbReference type="ChEBI" id="CHEBI:29105"/>
    </cofactor>
    <text evidence="1">Binds 2 Zn(2+) ions.</text>
</comment>
<comment type="subunit">
    <text evidence="1">Homodimer.</text>
</comment>
<comment type="similarity">
    <text evidence="1">Belongs to the RNase Z family.</text>
</comment>
<proteinExistence type="inferred from homology"/>
<feature type="chain" id="PRO_0000155901" description="Ribonuclease Z">
    <location>
        <begin position="1"/>
        <end position="309"/>
    </location>
</feature>
<feature type="active site" description="Proton acceptor" evidence="1">
    <location>
        <position position="67"/>
    </location>
</feature>
<feature type="binding site" evidence="1">
    <location>
        <position position="63"/>
    </location>
    <ligand>
        <name>Zn(2+)</name>
        <dbReference type="ChEBI" id="CHEBI:29105"/>
        <label>1</label>
        <note>catalytic</note>
    </ligand>
</feature>
<feature type="binding site" evidence="1">
    <location>
        <position position="65"/>
    </location>
    <ligand>
        <name>Zn(2+)</name>
        <dbReference type="ChEBI" id="CHEBI:29105"/>
        <label>1</label>
        <note>catalytic</note>
    </ligand>
</feature>
<feature type="binding site" evidence="1">
    <location>
        <position position="67"/>
    </location>
    <ligand>
        <name>Zn(2+)</name>
        <dbReference type="ChEBI" id="CHEBI:29105"/>
        <label>2</label>
        <note>catalytic</note>
    </ligand>
</feature>
<feature type="binding site" evidence="1">
    <location>
        <position position="68"/>
    </location>
    <ligand>
        <name>Zn(2+)</name>
        <dbReference type="ChEBI" id="CHEBI:29105"/>
        <label>2</label>
        <note>catalytic</note>
    </ligand>
</feature>
<feature type="binding site" evidence="1">
    <location>
        <position position="145"/>
    </location>
    <ligand>
        <name>Zn(2+)</name>
        <dbReference type="ChEBI" id="CHEBI:29105"/>
        <label>1</label>
        <note>catalytic</note>
    </ligand>
</feature>
<feature type="binding site" evidence="1">
    <location>
        <position position="216"/>
    </location>
    <ligand>
        <name>Zn(2+)</name>
        <dbReference type="ChEBI" id="CHEBI:29105"/>
        <label>1</label>
        <note>catalytic</note>
    </ligand>
</feature>
<feature type="binding site" evidence="1">
    <location>
        <position position="216"/>
    </location>
    <ligand>
        <name>Zn(2+)</name>
        <dbReference type="ChEBI" id="CHEBI:29105"/>
        <label>2</label>
        <note>catalytic</note>
    </ligand>
</feature>
<feature type="binding site" evidence="1">
    <location>
        <position position="274"/>
    </location>
    <ligand>
        <name>Zn(2+)</name>
        <dbReference type="ChEBI" id="CHEBI:29105"/>
        <label>2</label>
        <note>catalytic</note>
    </ligand>
</feature>
<keyword id="KW-0255">Endonuclease</keyword>
<keyword id="KW-0378">Hydrolase</keyword>
<keyword id="KW-0479">Metal-binding</keyword>
<keyword id="KW-0540">Nuclease</keyword>
<keyword id="KW-0819">tRNA processing</keyword>
<keyword id="KW-0862">Zinc</keyword>